<name>PYRG_METMJ</name>
<evidence type="ECO:0000255" key="1">
    <source>
        <dbReference type="HAMAP-Rule" id="MF_01227"/>
    </source>
</evidence>
<comment type="function">
    <text evidence="1">Catalyzes the ATP-dependent amination of UTP to CTP with either L-glutamine or ammonia as the source of nitrogen. Regulates intracellular CTP levels through interactions with the four ribonucleotide triphosphates.</text>
</comment>
<comment type="catalytic activity">
    <reaction evidence="1">
        <text>UTP + L-glutamine + ATP + H2O = CTP + L-glutamate + ADP + phosphate + 2 H(+)</text>
        <dbReference type="Rhea" id="RHEA:26426"/>
        <dbReference type="ChEBI" id="CHEBI:15377"/>
        <dbReference type="ChEBI" id="CHEBI:15378"/>
        <dbReference type="ChEBI" id="CHEBI:29985"/>
        <dbReference type="ChEBI" id="CHEBI:30616"/>
        <dbReference type="ChEBI" id="CHEBI:37563"/>
        <dbReference type="ChEBI" id="CHEBI:43474"/>
        <dbReference type="ChEBI" id="CHEBI:46398"/>
        <dbReference type="ChEBI" id="CHEBI:58359"/>
        <dbReference type="ChEBI" id="CHEBI:456216"/>
        <dbReference type="EC" id="6.3.4.2"/>
    </reaction>
</comment>
<comment type="catalytic activity">
    <reaction evidence="1">
        <text>L-glutamine + H2O = L-glutamate + NH4(+)</text>
        <dbReference type="Rhea" id="RHEA:15889"/>
        <dbReference type="ChEBI" id="CHEBI:15377"/>
        <dbReference type="ChEBI" id="CHEBI:28938"/>
        <dbReference type="ChEBI" id="CHEBI:29985"/>
        <dbReference type="ChEBI" id="CHEBI:58359"/>
    </reaction>
</comment>
<comment type="catalytic activity">
    <reaction evidence="1">
        <text>UTP + NH4(+) + ATP = CTP + ADP + phosphate + 2 H(+)</text>
        <dbReference type="Rhea" id="RHEA:16597"/>
        <dbReference type="ChEBI" id="CHEBI:15378"/>
        <dbReference type="ChEBI" id="CHEBI:28938"/>
        <dbReference type="ChEBI" id="CHEBI:30616"/>
        <dbReference type="ChEBI" id="CHEBI:37563"/>
        <dbReference type="ChEBI" id="CHEBI:43474"/>
        <dbReference type="ChEBI" id="CHEBI:46398"/>
        <dbReference type="ChEBI" id="CHEBI:456216"/>
    </reaction>
</comment>
<comment type="activity regulation">
    <text evidence="1">Allosterically activated by GTP, when glutamine is the substrate; GTP has no effect on the reaction when ammonia is the substrate. The allosteric effector GTP functions by stabilizing the protein conformation that binds the tetrahedral intermediate(s) formed during glutamine hydrolysis. Inhibited by the product CTP, via allosteric rather than competitive inhibition.</text>
</comment>
<comment type="pathway">
    <text evidence="1">Pyrimidine metabolism; CTP biosynthesis via de novo pathway; CTP from UDP: step 2/2.</text>
</comment>
<comment type="subunit">
    <text evidence="1">Homotetramer.</text>
</comment>
<comment type="miscellaneous">
    <text evidence="1">CTPSs have evolved a hybrid strategy for distinguishing between UTP and CTP. The overlapping regions of the product feedback inhibitory and substrate sites recognize a common feature in both compounds, the triphosphate moiety. To differentiate isosteric substrate and product pyrimidine rings, an additional pocket far from the expected kinase/ligase catalytic site, specifically recognizes the cytosine and ribose portions of the product inhibitor.</text>
</comment>
<comment type="similarity">
    <text evidence="1">Belongs to the CTP synthase family.</text>
</comment>
<dbReference type="EC" id="6.3.4.2" evidence="1"/>
<dbReference type="EMBL" id="CP000562">
    <property type="protein sequence ID" value="ABN57825.1"/>
    <property type="molecule type" value="Genomic_DNA"/>
</dbReference>
<dbReference type="RefSeq" id="WP_011844734.1">
    <property type="nucleotide sequence ID" value="NC_009051.1"/>
</dbReference>
<dbReference type="SMR" id="A3CWS5"/>
<dbReference type="STRING" id="368407.Memar_1899"/>
<dbReference type="GeneID" id="4848038"/>
<dbReference type="KEGG" id="mem:Memar_1899"/>
<dbReference type="eggNOG" id="arCOG00063">
    <property type="taxonomic scope" value="Archaea"/>
</dbReference>
<dbReference type="HOGENOM" id="CLU_011675_5_0_2"/>
<dbReference type="UniPathway" id="UPA00159">
    <property type="reaction ID" value="UER00277"/>
</dbReference>
<dbReference type="Proteomes" id="UP000002146">
    <property type="component" value="Chromosome"/>
</dbReference>
<dbReference type="GO" id="GO:0005524">
    <property type="term" value="F:ATP binding"/>
    <property type="evidence" value="ECO:0007669"/>
    <property type="project" value="UniProtKB-KW"/>
</dbReference>
<dbReference type="GO" id="GO:0003883">
    <property type="term" value="F:CTP synthase activity"/>
    <property type="evidence" value="ECO:0007669"/>
    <property type="project" value="UniProtKB-UniRule"/>
</dbReference>
<dbReference type="GO" id="GO:0004359">
    <property type="term" value="F:glutaminase activity"/>
    <property type="evidence" value="ECO:0007669"/>
    <property type="project" value="RHEA"/>
</dbReference>
<dbReference type="GO" id="GO:0042802">
    <property type="term" value="F:identical protein binding"/>
    <property type="evidence" value="ECO:0007669"/>
    <property type="project" value="TreeGrafter"/>
</dbReference>
<dbReference type="GO" id="GO:0046872">
    <property type="term" value="F:metal ion binding"/>
    <property type="evidence" value="ECO:0007669"/>
    <property type="project" value="UniProtKB-KW"/>
</dbReference>
<dbReference type="GO" id="GO:0044210">
    <property type="term" value="P:'de novo' CTP biosynthetic process"/>
    <property type="evidence" value="ECO:0007669"/>
    <property type="project" value="UniProtKB-UniRule"/>
</dbReference>
<dbReference type="GO" id="GO:0019856">
    <property type="term" value="P:pyrimidine nucleobase biosynthetic process"/>
    <property type="evidence" value="ECO:0007669"/>
    <property type="project" value="TreeGrafter"/>
</dbReference>
<dbReference type="CDD" id="cd03113">
    <property type="entry name" value="CTPS_N"/>
    <property type="match status" value="1"/>
</dbReference>
<dbReference type="CDD" id="cd01746">
    <property type="entry name" value="GATase1_CTP_Synthase"/>
    <property type="match status" value="1"/>
</dbReference>
<dbReference type="FunFam" id="3.40.50.300:FF:000009">
    <property type="entry name" value="CTP synthase"/>
    <property type="match status" value="1"/>
</dbReference>
<dbReference type="FunFam" id="3.40.50.880:FF:000002">
    <property type="entry name" value="CTP synthase"/>
    <property type="match status" value="1"/>
</dbReference>
<dbReference type="Gene3D" id="3.40.50.880">
    <property type="match status" value="1"/>
</dbReference>
<dbReference type="Gene3D" id="3.40.50.300">
    <property type="entry name" value="P-loop containing nucleotide triphosphate hydrolases"/>
    <property type="match status" value="1"/>
</dbReference>
<dbReference type="HAMAP" id="MF_01227">
    <property type="entry name" value="PyrG"/>
    <property type="match status" value="1"/>
</dbReference>
<dbReference type="InterPro" id="IPR029062">
    <property type="entry name" value="Class_I_gatase-like"/>
</dbReference>
<dbReference type="InterPro" id="IPR004468">
    <property type="entry name" value="CTP_synthase"/>
</dbReference>
<dbReference type="InterPro" id="IPR017456">
    <property type="entry name" value="CTP_synthase_N"/>
</dbReference>
<dbReference type="InterPro" id="IPR017926">
    <property type="entry name" value="GATASE"/>
</dbReference>
<dbReference type="InterPro" id="IPR033828">
    <property type="entry name" value="GATase1_CTP_Synthase"/>
</dbReference>
<dbReference type="InterPro" id="IPR027417">
    <property type="entry name" value="P-loop_NTPase"/>
</dbReference>
<dbReference type="NCBIfam" id="NF003792">
    <property type="entry name" value="PRK05380.1"/>
    <property type="match status" value="1"/>
</dbReference>
<dbReference type="NCBIfam" id="TIGR00337">
    <property type="entry name" value="PyrG"/>
    <property type="match status" value="1"/>
</dbReference>
<dbReference type="PANTHER" id="PTHR11550">
    <property type="entry name" value="CTP SYNTHASE"/>
    <property type="match status" value="1"/>
</dbReference>
<dbReference type="PANTHER" id="PTHR11550:SF0">
    <property type="entry name" value="CTP SYNTHASE-RELATED"/>
    <property type="match status" value="1"/>
</dbReference>
<dbReference type="Pfam" id="PF06418">
    <property type="entry name" value="CTP_synth_N"/>
    <property type="match status" value="1"/>
</dbReference>
<dbReference type="Pfam" id="PF00117">
    <property type="entry name" value="GATase"/>
    <property type="match status" value="1"/>
</dbReference>
<dbReference type="SUPFAM" id="SSF52317">
    <property type="entry name" value="Class I glutamine amidotransferase-like"/>
    <property type="match status" value="1"/>
</dbReference>
<dbReference type="SUPFAM" id="SSF52540">
    <property type="entry name" value="P-loop containing nucleoside triphosphate hydrolases"/>
    <property type="match status" value="1"/>
</dbReference>
<dbReference type="PROSITE" id="PS51273">
    <property type="entry name" value="GATASE_TYPE_1"/>
    <property type="match status" value="1"/>
</dbReference>
<feature type="chain" id="PRO_1000139486" description="CTP synthase">
    <location>
        <begin position="1"/>
        <end position="529"/>
    </location>
</feature>
<feature type="domain" description="Glutamine amidotransferase type-1" evidence="1">
    <location>
        <begin position="293"/>
        <end position="525"/>
    </location>
</feature>
<feature type="region of interest" description="Amidoligase domain" evidence="1">
    <location>
        <begin position="1"/>
        <end position="270"/>
    </location>
</feature>
<feature type="active site" description="Nucleophile; for glutamine hydrolysis" evidence="1">
    <location>
        <position position="376"/>
    </location>
</feature>
<feature type="active site" evidence="1">
    <location>
        <position position="498"/>
    </location>
</feature>
<feature type="active site" evidence="1">
    <location>
        <position position="500"/>
    </location>
</feature>
<feature type="binding site" evidence="1">
    <location>
        <position position="12"/>
    </location>
    <ligand>
        <name>CTP</name>
        <dbReference type="ChEBI" id="CHEBI:37563"/>
        <note>allosteric inhibitor</note>
    </ligand>
</feature>
<feature type="binding site" evidence="1">
    <location>
        <position position="12"/>
    </location>
    <ligand>
        <name>UTP</name>
        <dbReference type="ChEBI" id="CHEBI:46398"/>
    </ligand>
</feature>
<feature type="binding site" evidence="1">
    <location>
        <begin position="13"/>
        <end position="18"/>
    </location>
    <ligand>
        <name>ATP</name>
        <dbReference type="ChEBI" id="CHEBI:30616"/>
    </ligand>
</feature>
<feature type="binding site" evidence="1">
    <location>
        <position position="70"/>
    </location>
    <ligand>
        <name>ATP</name>
        <dbReference type="ChEBI" id="CHEBI:30616"/>
    </ligand>
</feature>
<feature type="binding site" evidence="1">
    <location>
        <position position="70"/>
    </location>
    <ligand>
        <name>Mg(2+)</name>
        <dbReference type="ChEBI" id="CHEBI:18420"/>
    </ligand>
</feature>
<feature type="binding site" evidence="1">
    <location>
        <position position="145"/>
    </location>
    <ligand>
        <name>Mg(2+)</name>
        <dbReference type="ChEBI" id="CHEBI:18420"/>
    </ligand>
</feature>
<feature type="binding site" evidence="1">
    <location>
        <begin position="152"/>
        <end position="154"/>
    </location>
    <ligand>
        <name>CTP</name>
        <dbReference type="ChEBI" id="CHEBI:37563"/>
        <note>allosteric inhibitor</note>
    </ligand>
</feature>
<feature type="binding site" evidence="1">
    <location>
        <begin position="191"/>
        <end position="196"/>
    </location>
    <ligand>
        <name>CTP</name>
        <dbReference type="ChEBI" id="CHEBI:37563"/>
        <note>allosteric inhibitor</note>
    </ligand>
</feature>
<feature type="binding site" evidence="1">
    <location>
        <begin position="191"/>
        <end position="196"/>
    </location>
    <ligand>
        <name>UTP</name>
        <dbReference type="ChEBI" id="CHEBI:46398"/>
    </ligand>
</feature>
<feature type="binding site" evidence="1">
    <location>
        <position position="227"/>
    </location>
    <ligand>
        <name>CTP</name>
        <dbReference type="ChEBI" id="CHEBI:37563"/>
        <note>allosteric inhibitor</note>
    </ligand>
</feature>
<feature type="binding site" evidence="1">
    <location>
        <position position="227"/>
    </location>
    <ligand>
        <name>UTP</name>
        <dbReference type="ChEBI" id="CHEBI:46398"/>
    </ligand>
</feature>
<feature type="binding site" evidence="1">
    <location>
        <begin position="243"/>
        <end position="245"/>
    </location>
    <ligand>
        <name>ATP</name>
        <dbReference type="ChEBI" id="CHEBI:30616"/>
    </ligand>
</feature>
<feature type="binding site" evidence="1">
    <location>
        <position position="349"/>
    </location>
    <ligand>
        <name>L-glutamine</name>
        <dbReference type="ChEBI" id="CHEBI:58359"/>
    </ligand>
</feature>
<feature type="binding site" evidence="1">
    <location>
        <begin position="377"/>
        <end position="380"/>
    </location>
    <ligand>
        <name>L-glutamine</name>
        <dbReference type="ChEBI" id="CHEBI:58359"/>
    </ligand>
</feature>
<feature type="binding site" evidence="1">
    <location>
        <position position="400"/>
    </location>
    <ligand>
        <name>L-glutamine</name>
        <dbReference type="ChEBI" id="CHEBI:58359"/>
    </ligand>
</feature>
<feature type="binding site" evidence="1">
    <location>
        <position position="455"/>
    </location>
    <ligand>
        <name>L-glutamine</name>
        <dbReference type="ChEBI" id="CHEBI:58359"/>
    </ligand>
</feature>
<proteinExistence type="inferred from homology"/>
<accession>A3CWS5</accession>
<gene>
    <name evidence="1" type="primary">pyrG</name>
    <name type="ordered locus">Memar_1899</name>
</gene>
<reference key="1">
    <citation type="journal article" date="2009" name="Stand. Genomic Sci.">
        <title>Complete genome sequence of Methanoculleus marisnigri Romesser et al. 1981 type strain JR1.</title>
        <authorList>
            <person name="Anderson I.J."/>
            <person name="Sieprawska-Lupa M."/>
            <person name="Lapidus A."/>
            <person name="Nolan M."/>
            <person name="Copeland A."/>
            <person name="Glavina Del Rio T."/>
            <person name="Tice H."/>
            <person name="Dalin E."/>
            <person name="Barry K."/>
            <person name="Saunders E."/>
            <person name="Han C."/>
            <person name="Brettin T."/>
            <person name="Detter J.C."/>
            <person name="Bruce D."/>
            <person name="Mikhailova N."/>
            <person name="Pitluck S."/>
            <person name="Hauser L."/>
            <person name="Land M."/>
            <person name="Lucas S."/>
            <person name="Richardson P."/>
            <person name="Whitman W.B."/>
            <person name="Kyrpides N.C."/>
        </authorList>
    </citation>
    <scope>NUCLEOTIDE SEQUENCE [LARGE SCALE GENOMIC DNA]</scope>
    <source>
        <strain>ATCC 35101 / DSM 1498 / JR1</strain>
    </source>
</reference>
<organism>
    <name type="scientific">Methanoculleus marisnigri (strain ATCC 35101 / DSM 1498 / JR1)</name>
    <dbReference type="NCBI Taxonomy" id="368407"/>
    <lineage>
        <taxon>Archaea</taxon>
        <taxon>Methanobacteriati</taxon>
        <taxon>Methanobacteriota</taxon>
        <taxon>Stenosarchaea group</taxon>
        <taxon>Methanomicrobia</taxon>
        <taxon>Methanomicrobiales</taxon>
        <taxon>Methanomicrobiaceae</taxon>
        <taxon>Methanoculleus</taxon>
    </lineage>
</organism>
<keyword id="KW-0067">ATP-binding</keyword>
<keyword id="KW-0315">Glutamine amidotransferase</keyword>
<keyword id="KW-0436">Ligase</keyword>
<keyword id="KW-0460">Magnesium</keyword>
<keyword id="KW-0479">Metal-binding</keyword>
<keyword id="KW-0547">Nucleotide-binding</keyword>
<keyword id="KW-0665">Pyrimidine biosynthesis</keyword>
<sequence>MKYIVVTGGVMSGLGKGITTASIGRLLKNRGYQVTAVKIDPYLNIDAGTMNPAQHGEVFVLSDGGEVDLDLGNYERFLDINLKSIHNITTGKVYRNVIEKERRGDFLGATVQIIPHITDEIRYCISRAAQETVNGGKVADVCMVEVGGTVGDIESMPFLEAVRQMHGDLAPEDMILVHVTLVPMDTMGDFKTKPTQHSVKALRELGLQPDIIVARSSDVIGPQTKKKISTFTDVPVKAVVSAKDAPDIYQIPMELEKEGLADVVCSYLSLENREPDTAWYRVVSQEYTNRVTVAIVSKYGIEDVYMSIKESLKHAGRALSTEVNIRWLDAETFELHDLADVDGILIPGGFGKRGIEGKIRAIRYARENKKPYLGLCLGFQLAVIEYTRHVLGIEDATSEEMGDGTHVIAILPEQEEVSDLGGTMRLGDCDVVLKDGTKVTGLYGKTAIVERHRHRYEVNPAFIADLEAAGLVFSGTCGPRMEVCEIPNHPFYLATQFHPEFRSSPTKPSPPYIGFVEACKKNKSSSEIR</sequence>
<protein>
    <recommendedName>
        <fullName evidence="1">CTP synthase</fullName>
        <ecNumber evidence="1">6.3.4.2</ecNumber>
    </recommendedName>
    <alternativeName>
        <fullName evidence="1">Cytidine 5'-triphosphate synthase</fullName>
    </alternativeName>
    <alternativeName>
        <fullName evidence="1">Cytidine triphosphate synthetase</fullName>
        <shortName evidence="1">CTP synthetase</shortName>
        <shortName evidence="1">CTPS</shortName>
    </alternativeName>
    <alternativeName>
        <fullName evidence="1">UTP--ammonia ligase</fullName>
    </alternativeName>
</protein>